<proteinExistence type="evidence at transcript level"/>
<dbReference type="EMBL" id="BC088522">
    <property type="protein sequence ID" value="AAH88522.1"/>
    <property type="molecule type" value="mRNA"/>
</dbReference>
<dbReference type="RefSeq" id="NP_001011358.1">
    <property type="nucleotide sequence ID" value="NM_001011358.1"/>
</dbReference>
<dbReference type="SMR" id="Q5M7P5"/>
<dbReference type="FunCoup" id="Q5M7P5">
    <property type="interactions" value="2756"/>
</dbReference>
<dbReference type="STRING" id="8364.ENSXETP00000018226"/>
<dbReference type="PaxDb" id="8364-ENSXETP00000004588"/>
<dbReference type="DNASU" id="496825"/>
<dbReference type="GeneID" id="496825"/>
<dbReference type="KEGG" id="xtr:496825"/>
<dbReference type="AGR" id="Xenbase:XB-GENE-994692"/>
<dbReference type="CTD" id="65083"/>
<dbReference type="Xenbase" id="XB-GENE-994692">
    <property type="gene designation" value="nol6"/>
</dbReference>
<dbReference type="eggNOG" id="KOG2054">
    <property type="taxonomic scope" value="Eukaryota"/>
</dbReference>
<dbReference type="InParanoid" id="Q5M7P5"/>
<dbReference type="OMA" id="NPHGGKE"/>
<dbReference type="OrthoDB" id="10251401at2759"/>
<dbReference type="Proteomes" id="UP000008143">
    <property type="component" value="Chromosome 1"/>
</dbReference>
<dbReference type="GO" id="GO:0005694">
    <property type="term" value="C:chromosome"/>
    <property type="evidence" value="ECO:0007669"/>
    <property type="project" value="UniProtKB-SubCell"/>
</dbReference>
<dbReference type="GO" id="GO:0005730">
    <property type="term" value="C:nucleolus"/>
    <property type="evidence" value="ECO:0007669"/>
    <property type="project" value="UniProtKB-SubCell"/>
</dbReference>
<dbReference type="GO" id="GO:0032040">
    <property type="term" value="C:small-subunit processome"/>
    <property type="evidence" value="ECO:0000250"/>
    <property type="project" value="UniProtKB"/>
</dbReference>
<dbReference type="GO" id="GO:0003723">
    <property type="term" value="F:RNA binding"/>
    <property type="evidence" value="ECO:0007669"/>
    <property type="project" value="UniProtKB-KW"/>
</dbReference>
<dbReference type="GO" id="GO:0042274">
    <property type="term" value="P:ribosomal small subunit biogenesis"/>
    <property type="evidence" value="ECO:0000250"/>
    <property type="project" value="UniProtKB"/>
</dbReference>
<dbReference type="FunFam" id="1.10.1410.10:FF:000005">
    <property type="entry name" value="Nucleolar protein 6"/>
    <property type="match status" value="1"/>
</dbReference>
<dbReference type="FunFam" id="1.10.1410.10:FF:000006">
    <property type="entry name" value="Nucleolar protein 6"/>
    <property type="match status" value="1"/>
</dbReference>
<dbReference type="FunFam" id="3.30.70.3030:FF:000001">
    <property type="entry name" value="Nucleolar protein 6"/>
    <property type="match status" value="1"/>
</dbReference>
<dbReference type="Gene3D" id="1.10.1410.10">
    <property type="match status" value="2"/>
</dbReference>
<dbReference type="Gene3D" id="3.30.70.3030">
    <property type="match status" value="1"/>
</dbReference>
<dbReference type="InterPro" id="IPR005554">
    <property type="entry name" value="NOL6/Upt22"/>
</dbReference>
<dbReference type="InterPro" id="IPR035082">
    <property type="entry name" value="Nrap_D1"/>
</dbReference>
<dbReference type="InterPro" id="IPR035367">
    <property type="entry name" value="Nrap_D2"/>
</dbReference>
<dbReference type="InterPro" id="IPR035368">
    <property type="entry name" value="Nrap_D3"/>
</dbReference>
<dbReference type="InterPro" id="IPR035369">
    <property type="entry name" value="Nrap_D4"/>
</dbReference>
<dbReference type="InterPro" id="IPR035370">
    <property type="entry name" value="Nrap_D5"/>
</dbReference>
<dbReference type="InterPro" id="IPR035371">
    <property type="entry name" value="Nrap_D6"/>
</dbReference>
<dbReference type="PANTHER" id="PTHR17972:SF0">
    <property type="entry name" value="NUCLEOLAR PROTEIN 6"/>
    <property type="match status" value="1"/>
</dbReference>
<dbReference type="PANTHER" id="PTHR17972">
    <property type="entry name" value="NUCLEOLAR RNA-ASSOCIATED PROTEIN"/>
    <property type="match status" value="1"/>
</dbReference>
<dbReference type="Pfam" id="PF03813">
    <property type="entry name" value="Nrap"/>
    <property type="match status" value="1"/>
</dbReference>
<dbReference type="Pfam" id="PF17403">
    <property type="entry name" value="Nrap_D2"/>
    <property type="match status" value="1"/>
</dbReference>
<dbReference type="Pfam" id="PF17404">
    <property type="entry name" value="Nrap_D3"/>
    <property type="match status" value="1"/>
</dbReference>
<dbReference type="Pfam" id="PF17405">
    <property type="entry name" value="Nrap_D4"/>
    <property type="match status" value="1"/>
</dbReference>
<dbReference type="Pfam" id="PF17406">
    <property type="entry name" value="Nrap_D5"/>
    <property type="match status" value="1"/>
</dbReference>
<dbReference type="Pfam" id="PF17407">
    <property type="entry name" value="Nrap_D6"/>
    <property type="match status" value="1"/>
</dbReference>
<name>NOL6_XENTR</name>
<keyword id="KW-0158">Chromosome</keyword>
<keyword id="KW-0539">Nucleus</keyword>
<keyword id="KW-1185">Reference proteome</keyword>
<keyword id="KW-0694">RNA-binding</keyword>
<evidence type="ECO:0000250" key="1">
    <source>
        <dbReference type="UniProtKB" id="Q8R5K4"/>
    </source>
</evidence>
<evidence type="ECO:0000250" key="2">
    <source>
        <dbReference type="UniProtKB" id="Q9H6R4"/>
    </source>
</evidence>
<evidence type="ECO:0000256" key="3">
    <source>
        <dbReference type="SAM" id="MobiDB-lite"/>
    </source>
</evidence>
<evidence type="ECO:0000305" key="4"/>
<comment type="function">
    <text evidence="2">Part of the small subunit (SSU) processome, first precursor of the small eukaryotic ribosomal subunit. During the assembly of the SSU processome in the nucleolus, many ribosome biogenesis factors, an RNA chaperone and ribosomal proteins associate with the nascent pre-rRNA and work in concert to generate RNA folding, modifications, rearrangements and cleavage as well as targeted degradation of pre-ribosomal RNA by the RNA exosome.</text>
</comment>
<comment type="subunit">
    <text evidence="2">Part of the small subunit (SSU) processome, composed of more than 70 proteins and the RNA chaperone small nucleolar RNA (snoRNA) U3.</text>
</comment>
<comment type="subcellular location">
    <subcellularLocation>
        <location evidence="2">Nucleus</location>
        <location evidence="2">Nucleolus</location>
    </subcellularLocation>
    <subcellularLocation>
        <location evidence="1">Chromosome</location>
    </subcellularLocation>
    <text evidence="1">Localizes to condensed chromosomes in mitosis.</text>
</comment>
<comment type="similarity">
    <text evidence="4">Belongs to the NRAP family.</text>
</comment>
<accession>Q5M7P5</accession>
<organism>
    <name type="scientific">Xenopus tropicalis</name>
    <name type="common">Western clawed frog</name>
    <name type="synonym">Silurana tropicalis</name>
    <dbReference type="NCBI Taxonomy" id="8364"/>
    <lineage>
        <taxon>Eukaryota</taxon>
        <taxon>Metazoa</taxon>
        <taxon>Chordata</taxon>
        <taxon>Craniata</taxon>
        <taxon>Vertebrata</taxon>
        <taxon>Euteleostomi</taxon>
        <taxon>Amphibia</taxon>
        <taxon>Batrachia</taxon>
        <taxon>Anura</taxon>
        <taxon>Pipoidea</taxon>
        <taxon>Pipidae</taxon>
        <taxon>Xenopodinae</taxon>
        <taxon>Xenopus</taxon>
        <taxon>Silurana</taxon>
    </lineage>
</organism>
<feature type="chain" id="PRO_0000215650" description="Nucleolar protein 6">
    <location>
        <begin position="1"/>
        <end position="1145"/>
    </location>
</feature>
<feature type="region of interest" description="Disordered" evidence="3">
    <location>
        <begin position="1"/>
        <end position="46"/>
    </location>
</feature>
<protein>
    <recommendedName>
        <fullName>Nucleolar protein 6</fullName>
    </recommendedName>
</protein>
<reference key="1">
    <citation type="submission" date="2004-12" db="EMBL/GenBank/DDBJ databases">
        <authorList>
            <consortium name="NIH - Xenopus Gene Collection (XGC) project"/>
        </authorList>
    </citation>
    <scope>NUCLEOTIDE SEQUENCE [LARGE SCALE MRNA]</scope>
    <source>
        <tissue>Embryo</tissue>
    </source>
</reference>
<gene>
    <name type="primary">nol6</name>
</gene>
<sequence>MQKKRNRAGPPQQEAASDDGEMSDSSDKMEVAQGKGKSAVKRAPDADEVLRPVKLSKSDLYKPPTNDELNRLKETEHLFHTNLLRMQIEELLQEVKLKEKRRKTIDGFLREINTLLGTIPETPQTDLTDQTWLPDSIKVPILQVPYQVKGKFCFLPPSSIKVVGSYLLGTCIKPEINVDLAVTMPQEILQAKDNLNQRYSRKRALYLAHIASHLANNELFSSVKFTYMNSNHLKPVLLLRPYGKDEKLVTVRIHVCPPPGFFKISRLYPNKNNVRTAWYTEQETEGVNEPPTPHYNNTILSDLTLEHHLHHLSNCASDFPGMKDAVALLKVWLHQRQLDKGYGCFNGFLAAMLISYLLSKNKINKVMSGYQVLRNTLQFLATTDLTVNGITMATSTDSSLPSLHDFHEAFQVVFVDPLGVVNLCADMTTNKYHQIQFEARESLKVLDDTSADGFHLLLMVPKPFVRTFDHVFHLTNVSKLQGTCKKMKLLNQLIDQGGDYLATSLPYVLSILSKGLGPRVALLSHTLPHRPEWDIGEEPAKHRDSSLLSVGLLLEAELHTSVLEKGPAADSSQALDFRAFWGEKSELRRFQDGSICEAVVWPGSSLCEKRKVPELIVKYLLELHADIPESCISYTGNVLDCVLTRGKEAGTEEEKMVGIIQSYDDLSRKLWNLTDLPLTVTSVQGTHPCLRYSDVFPPLPVKPDWSSYQLLREKKCLVPNPEKPCPAYVAPVKVICHMEGSGKWPQDKDAIKRVKAAFQIRLAELLRAQHQLLCNPSATHTDVYKDGYVFRVQVAYHREPQYMKEIVTPEGMLKYQDTEESLQLELETLHLPSLTSTLHGLHQQHPAFGGTSRMAKRWIHSQLLGDSFSEECVDLLVAHLFLHPAPYSPPSSPQVGFLRFLHLLATFDWKNSPLIVNLNGELKGPDYTEIQNDFISARAQLPVMFIATPKDKKDSLWTKTQPTAQILQRLIVLCLESLRALEQQLMDPSGSQDYKMTFRPPLDLYDILIRLNPKQIPRHREAVDQPAKSFFRGLLKEGAQVKDLMFPVVGYDPVQCYLQELREAYGEFALFFHDKHGGDVIGVLWKPSGFEPQPFKTTNMTGRVMDGKSAKPLLVPNVEAIVEDFEILGEGLVASVEARTERWSI</sequence>